<reference key="1">
    <citation type="journal article" date="1994" name="J. Bacteriol.">
        <title>The pca-pob supraoperonic cluster of Acinetobacter calcoaceticus contains quiA, the structural gene for quinate-shikimate dehydrogenase.</title>
        <authorList>
            <person name="Elsemore D.A."/>
            <person name="Ornston L.N."/>
        </authorList>
    </citation>
    <scope>NUCLEOTIDE SEQUENCE [GENOMIC DNA]</scope>
    <scope>CHARACTERIZATION</scope>
</reference>
<reference key="2">
    <citation type="journal article" date="2004" name="Nucleic Acids Res.">
        <title>Unique features revealed by the genome sequence of Acinetobacter sp. ADP1, a versatile and naturally transformation competent bacterium.</title>
        <authorList>
            <person name="Barbe V."/>
            <person name="Vallenet D."/>
            <person name="Fonknechten N."/>
            <person name="Kreimeyer A."/>
            <person name="Oztas S."/>
            <person name="Labarre L."/>
            <person name="Cruveiller S."/>
            <person name="Robert C."/>
            <person name="Duprat S."/>
            <person name="Wincker P."/>
            <person name="Ornston L.N."/>
            <person name="Weissenbach J."/>
            <person name="Marliere P."/>
            <person name="Cohen G.N."/>
            <person name="Medigue C."/>
        </authorList>
    </citation>
    <scope>NUCLEOTIDE SEQUENCE [LARGE SCALE GENOMIC DNA]</scope>
    <source>
        <strain>ATCC 33305 / BD413 / ADP1</strain>
    </source>
</reference>
<reference key="3">
    <citation type="journal article" date="1995" name="J. Bacteriol.">
        <title>Unusual ancestry of dehydratases associated with quinate catabolism in Acinetobacter calcoaceticus.</title>
        <authorList>
            <person name="Elsemore D.A."/>
            <person name="Ornston L.N."/>
        </authorList>
    </citation>
    <scope>NUCLEOTIDE SEQUENCE [GENOMIC DNA] OF 1-20</scope>
</reference>
<evidence type="ECO:0000255" key="1"/>
<evidence type="ECO:0000305" key="2"/>
<comment type="function">
    <text>Can act either on quinate or on shikimate.</text>
</comment>
<comment type="catalytic activity">
    <reaction>
        <text>L-quinate + a quinone = 3-dehydroquinate + a quinol</text>
        <dbReference type="Rhea" id="RHEA:23672"/>
        <dbReference type="ChEBI" id="CHEBI:24646"/>
        <dbReference type="ChEBI" id="CHEBI:29751"/>
        <dbReference type="ChEBI" id="CHEBI:32364"/>
        <dbReference type="ChEBI" id="CHEBI:132124"/>
        <dbReference type="EC" id="1.1.5.8"/>
    </reaction>
</comment>
<comment type="catalytic activity">
    <reaction>
        <text>shikimate + a quinone = 3-dehydroshikimate + a quinol</text>
        <dbReference type="Rhea" id="RHEA:47048"/>
        <dbReference type="ChEBI" id="CHEBI:16630"/>
        <dbReference type="ChEBI" id="CHEBI:24646"/>
        <dbReference type="ChEBI" id="CHEBI:36208"/>
        <dbReference type="ChEBI" id="CHEBI:132124"/>
    </reaction>
</comment>
<comment type="cofactor">
    <cofactor>
        <name>pyrroloquinoline quinone</name>
        <dbReference type="ChEBI" id="CHEBI:58442"/>
    </cofactor>
</comment>
<comment type="pathway">
    <text>Aromatic compound metabolism; 3,4-dihydroxybenzoate biosynthesis; 3-dehydroquinate from D-quinate (PQQ route): step 1/1.</text>
</comment>
<comment type="subcellular location">
    <subcellularLocation>
        <location evidence="2">Cell membrane</location>
        <topology evidence="2">Multi-pass membrane protein</topology>
    </subcellularLocation>
</comment>
<comment type="induction">
    <text>By protocatechuate.</text>
</comment>
<comment type="similarity">
    <text evidence="2">Belongs to the bacterial PQQ dehydrogenase family.</text>
</comment>
<comment type="sequence caution" evidence="2">
    <conflict type="erroneous initiation">
        <sequence resource="EMBL-CDS" id="CAG68558"/>
    </conflict>
</comment>
<sequence>MSDPQEKSHIILKVWCFILGLALLITGAFYVIGGGKLISLGGSWYFLIAGLMITTSAFFMFKKKATGVWLYALAFIGTVIWALIDAGFEFWPLHSRLMFPAGLFAAVMLTLPSIRKYQYQTPMSAPAYVIGGLTVLGMLGGLYGMFIPHETVKASGEELPLVPVDPAKKQVNWDHYGNDAGGSRFVALDQINRNNVSKLKEAWRFRTGDFTTGTGNGAEDQMTPLQVGNKVFLCTPHNNIFAIDADSGKQLWKAEVNSTADAWERCRGVAYFDSTQPLVQPTLAGATPVAALAANTECPRRVYTNTVDGRLIAVNADTGARCKDFGVNGTVNLHEGLGENTKAPRFEVTSAPTIAGTTIVVGSRIADNVAADMPGGVIRAYDVITGKLRWAFDPRNPDPNYVLKPGEIYKRSSTNSWAAMSYDPQMNTVFLPMGSSSVDVWGGNRTAADHKYNTSVLALDATTGKEKWVYNTVHNDLWDFDLPMQPSLVDFPMKDGTTKPAVVIGTKSGQFYVLDRVTGKPLTKVIEQPIKVADIPGEQYSKTQPRSVEMPQIGNQTLKESDMWGATPFDQLMCRINFKSMRYDGLYTAPGTDVSLSFPGSLGGMNWGSIAFDPTHRYMFVNDMRLGLWIQLIKQTPEDIKIQANGGEKVNTGMGAVPMKGTPYKVNKNRFMSALGIPCQKPPFGTMTAIDMKTRQVAWQVPLGTIQDTGPMGIKMGLKAPIGMPTIGGPMATQGGLVFFAATQDYYLRAFNSSNGKELWKARLPVGSQGTPMSYMSPKTGKQYVVVSAGGARQSPDHGDYVIAYALEK</sequence>
<organism>
    <name type="scientific">Acinetobacter baylyi (strain ATCC 33305 / BD413 / ADP1)</name>
    <dbReference type="NCBI Taxonomy" id="62977"/>
    <lineage>
        <taxon>Bacteria</taxon>
        <taxon>Pseudomonadati</taxon>
        <taxon>Pseudomonadota</taxon>
        <taxon>Gammaproteobacteria</taxon>
        <taxon>Moraxellales</taxon>
        <taxon>Moraxellaceae</taxon>
        <taxon>Acinetobacter</taxon>
    </lineage>
</organism>
<feature type="chain" id="PRO_0000205340" description="Quinate/shikimate dehydrogenase (quinone)">
    <location>
        <begin position="1"/>
        <end position="809"/>
    </location>
</feature>
<feature type="transmembrane region" description="Helical" evidence="1">
    <location>
        <begin position="14"/>
        <end position="34"/>
    </location>
</feature>
<feature type="transmembrane region" description="Helical" evidence="1">
    <location>
        <begin position="41"/>
        <end position="61"/>
    </location>
</feature>
<feature type="transmembrane region" description="Helical" evidence="1">
    <location>
        <begin position="68"/>
        <end position="88"/>
    </location>
</feature>
<feature type="transmembrane region" description="Helical" evidence="1">
    <location>
        <begin position="90"/>
        <end position="110"/>
    </location>
</feature>
<feature type="transmembrane region" description="Helical" evidence="1">
    <location>
        <begin position="127"/>
        <end position="147"/>
    </location>
</feature>
<dbReference type="EC" id="1.1.5.8"/>
<dbReference type="EMBL" id="L05770">
    <property type="protein sequence ID" value="AAC37161.1"/>
    <property type="molecule type" value="Genomic_DNA"/>
</dbReference>
<dbReference type="EMBL" id="CR543861">
    <property type="protein sequence ID" value="CAG68558.1"/>
    <property type="status" value="ALT_INIT"/>
    <property type="molecule type" value="Genomic_DNA"/>
</dbReference>
<dbReference type="PIR" id="A55547">
    <property type="entry name" value="A55547"/>
</dbReference>
<dbReference type="RefSeq" id="WP_004926659.1">
    <property type="nucleotide sequence ID" value="NC_005966.1"/>
</dbReference>
<dbReference type="SMR" id="Q59086"/>
<dbReference type="STRING" id="202950.GCA_001485005_03094"/>
<dbReference type="GeneID" id="45234103"/>
<dbReference type="KEGG" id="aci:ACIAD1716"/>
<dbReference type="eggNOG" id="COG4993">
    <property type="taxonomic scope" value="Bacteria"/>
</dbReference>
<dbReference type="HOGENOM" id="CLU_018478_1_0_6"/>
<dbReference type="OrthoDB" id="9794322at2"/>
<dbReference type="BioCyc" id="ASP62977:ACIAD_RS07910-MONOMER"/>
<dbReference type="BioCyc" id="MetaCyc:MONOMER-28"/>
<dbReference type="UniPathway" id="UPA00088">
    <property type="reaction ID" value="UER00177"/>
</dbReference>
<dbReference type="Proteomes" id="UP000000430">
    <property type="component" value="Chromosome"/>
</dbReference>
<dbReference type="GO" id="GO:0030288">
    <property type="term" value="C:outer membrane-bounded periplasmic space"/>
    <property type="evidence" value="ECO:0007669"/>
    <property type="project" value="InterPro"/>
</dbReference>
<dbReference type="GO" id="GO:0005886">
    <property type="term" value="C:plasma membrane"/>
    <property type="evidence" value="ECO:0007669"/>
    <property type="project" value="UniProtKB-SubCell"/>
</dbReference>
<dbReference type="GO" id="GO:0047519">
    <property type="term" value="F:quinate dehydrogenase (quinone) activity"/>
    <property type="evidence" value="ECO:0007669"/>
    <property type="project" value="UniProtKB-EC"/>
</dbReference>
<dbReference type="GO" id="GO:0048038">
    <property type="term" value="F:quinone binding"/>
    <property type="evidence" value="ECO:0007669"/>
    <property type="project" value="InterPro"/>
</dbReference>
<dbReference type="GO" id="GO:0008876">
    <property type="term" value="F:quinoprotein glucose dehydrogenase activity"/>
    <property type="evidence" value="ECO:0007669"/>
    <property type="project" value="TreeGrafter"/>
</dbReference>
<dbReference type="GO" id="GO:0046279">
    <property type="term" value="P:3,4-dihydroxybenzoate biosynthetic process"/>
    <property type="evidence" value="ECO:0007669"/>
    <property type="project" value="UniProtKB-UniPathway"/>
</dbReference>
<dbReference type="GO" id="GO:0019630">
    <property type="term" value="P:quinate metabolic process"/>
    <property type="evidence" value="ECO:0007669"/>
    <property type="project" value="UniProtKB-KW"/>
</dbReference>
<dbReference type="CDD" id="cd10280">
    <property type="entry name" value="PQQ_mGDH"/>
    <property type="match status" value="1"/>
</dbReference>
<dbReference type="Gene3D" id="2.140.10.10">
    <property type="entry name" value="Quinoprotein alcohol dehydrogenase-like superfamily"/>
    <property type="match status" value="1"/>
</dbReference>
<dbReference type="InterPro" id="IPR018391">
    <property type="entry name" value="PQQ_b-propeller_rpt"/>
</dbReference>
<dbReference type="InterPro" id="IPR017511">
    <property type="entry name" value="PQQ_mDH"/>
</dbReference>
<dbReference type="InterPro" id="IPR002372">
    <property type="entry name" value="PQQ_rpt_dom"/>
</dbReference>
<dbReference type="InterPro" id="IPR011047">
    <property type="entry name" value="Quinoprotein_ADH-like_sf"/>
</dbReference>
<dbReference type="InterPro" id="IPR001479">
    <property type="entry name" value="Quinoprotein_DH_CS"/>
</dbReference>
<dbReference type="NCBIfam" id="TIGR03074">
    <property type="entry name" value="PQQ_membr_DH"/>
    <property type="match status" value="1"/>
</dbReference>
<dbReference type="PANTHER" id="PTHR32303">
    <property type="entry name" value="QUINOPROTEIN ALCOHOL DEHYDROGENASE (CYTOCHROME C)"/>
    <property type="match status" value="1"/>
</dbReference>
<dbReference type="PANTHER" id="PTHR32303:SF4">
    <property type="entry name" value="QUINOPROTEIN GLUCOSE DEHYDROGENASE"/>
    <property type="match status" value="1"/>
</dbReference>
<dbReference type="Pfam" id="PF01011">
    <property type="entry name" value="PQQ"/>
    <property type="match status" value="1"/>
</dbReference>
<dbReference type="SMART" id="SM00564">
    <property type="entry name" value="PQQ"/>
    <property type="match status" value="7"/>
</dbReference>
<dbReference type="SUPFAM" id="SSF50998">
    <property type="entry name" value="Quinoprotein alcohol dehydrogenase-like"/>
    <property type="match status" value="1"/>
</dbReference>
<dbReference type="PROSITE" id="PS00363">
    <property type="entry name" value="BACTERIAL_PQQ_1"/>
    <property type="match status" value="1"/>
</dbReference>
<dbReference type="PROSITE" id="PS00364">
    <property type="entry name" value="BACTERIAL_PQQ_2"/>
    <property type="match status" value="1"/>
</dbReference>
<keyword id="KW-1003">Cell membrane</keyword>
<keyword id="KW-0472">Membrane</keyword>
<keyword id="KW-0560">Oxidoreductase</keyword>
<keyword id="KW-0634">PQQ</keyword>
<keyword id="KW-0672">Quinate metabolism</keyword>
<keyword id="KW-0812">Transmembrane</keyword>
<keyword id="KW-1133">Transmembrane helix</keyword>
<gene>
    <name type="primary">quiA</name>
    <name type="ordered locus">ACIAD1716</name>
</gene>
<accession>Q59086</accession>
<accession>Q6FBK4</accession>
<protein>
    <recommendedName>
        <fullName>Quinate/shikimate dehydrogenase (quinone)</fullName>
        <ecNumber>1.1.5.8</ecNumber>
    </recommendedName>
    <alternativeName>
        <fullName>NAD(P)-independent quinate dehydrogenase</fullName>
    </alternativeName>
</protein>
<proteinExistence type="evidence at protein level"/>
<name>QUIA_ACIAD</name>